<comment type="catalytic activity">
    <reaction evidence="1">
        <text>tRNA(His) + L-histidine + ATP = L-histidyl-tRNA(His) + AMP + diphosphate + H(+)</text>
        <dbReference type="Rhea" id="RHEA:17313"/>
        <dbReference type="Rhea" id="RHEA-COMP:9665"/>
        <dbReference type="Rhea" id="RHEA-COMP:9689"/>
        <dbReference type="ChEBI" id="CHEBI:15378"/>
        <dbReference type="ChEBI" id="CHEBI:30616"/>
        <dbReference type="ChEBI" id="CHEBI:33019"/>
        <dbReference type="ChEBI" id="CHEBI:57595"/>
        <dbReference type="ChEBI" id="CHEBI:78442"/>
        <dbReference type="ChEBI" id="CHEBI:78527"/>
        <dbReference type="ChEBI" id="CHEBI:456215"/>
        <dbReference type="EC" id="6.1.1.21"/>
    </reaction>
</comment>
<comment type="subunit">
    <text evidence="1">Homodimer.</text>
</comment>
<comment type="subcellular location">
    <subcellularLocation>
        <location evidence="1">Cytoplasm</location>
    </subcellularLocation>
</comment>
<comment type="similarity">
    <text evidence="1">Belongs to the class-II aminoacyl-tRNA synthetase family.</text>
</comment>
<proteinExistence type="inferred from homology"/>
<sequence>MTQLQSLRGMVDLLPEQTRCWQAVESVARDHFRRAGLQEIRTPLLEVTELFARGIGEATDVVGKEMYTFVDRGDRSCTLRPEGTASVVRAALQHGLLSQGPQRLWYGGPMFRYERPQAGRQRQFYQIGVEYLGVGSPRSDAEVIALAWALLVDLGVQGLVLEINSLGTLQDRQKYREELVAWLEARSDQLDDDSRKRLYTNPLRILDSKNPAISELLQDAPTLFEALSVESKARFEEVQVDLEALQIPFQLNPRLVRGLDYYGHTAFEITSDQLGAQATVCGGGRYDGLVEQLGGAPTPAFGWAFGMERLMLLLESAASINPNGSAARLTASTRPDLYVVNRGEQAERVALVIAHQLRAAGLVVELDSSGSAFNKQFKRAGRSRATWALVIGDDEAERGEARLKYLQEATTQANPIPIDQLHRLDDVTGLVRLVRE</sequence>
<dbReference type="EC" id="6.1.1.21" evidence="1"/>
<dbReference type="EMBL" id="CP000554">
    <property type="protein sequence ID" value="ABM79271.1"/>
    <property type="molecule type" value="Genomic_DNA"/>
</dbReference>
<dbReference type="RefSeq" id="WP_011827115.1">
    <property type="nucleotide sequence ID" value="NC_008820.1"/>
</dbReference>
<dbReference type="SMR" id="A2CCR1"/>
<dbReference type="STRING" id="59922.P9303_25401"/>
<dbReference type="KEGG" id="pmf:P9303_25401"/>
<dbReference type="HOGENOM" id="CLU_025113_1_1_3"/>
<dbReference type="BioCyc" id="PMAR59922:G1G80-2230-MONOMER"/>
<dbReference type="Proteomes" id="UP000002274">
    <property type="component" value="Chromosome"/>
</dbReference>
<dbReference type="GO" id="GO:0005737">
    <property type="term" value="C:cytoplasm"/>
    <property type="evidence" value="ECO:0007669"/>
    <property type="project" value="UniProtKB-SubCell"/>
</dbReference>
<dbReference type="GO" id="GO:0005524">
    <property type="term" value="F:ATP binding"/>
    <property type="evidence" value="ECO:0007669"/>
    <property type="project" value="UniProtKB-UniRule"/>
</dbReference>
<dbReference type="GO" id="GO:0004821">
    <property type="term" value="F:histidine-tRNA ligase activity"/>
    <property type="evidence" value="ECO:0007669"/>
    <property type="project" value="UniProtKB-UniRule"/>
</dbReference>
<dbReference type="GO" id="GO:0006427">
    <property type="term" value="P:histidyl-tRNA aminoacylation"/>
    <property type="evidence" value="ECO:0007669"/>
    <property type="project" value="UniProtKB-UniRule"/>
</dbReference>
<dbReference type="CDD" id="cd00773">
    <property type="entry name" value="HisRS-like_core"/>
    <property type="match status" value="1"/>
</dbReference>
<dbReference type="CDD" id="cd00859">
    <property type="entry name" value="HisRS_anticodon"/>
    <property type="match status" value="1"/>
</dbReference>
<dbReference type="FunFam" id="3.30.930.10:FF:000005">
    <property type="entry name" value="Histidine--tRNA ligase"/>
    <property type="match status" value="1"/>
</dbReference>
<dbReference type="Gene3D" id="3.40.50.800">
    <property type="entry name" value="Anticodon-binding domain"/>
    <property type="match status" value="1"/>
</dbReference>
<dbReference type="Gene3D" id="3.30.930.10">
    <property type="entry name" value="Bira Bifunctional Protein, Domain 2"/>
    <property type="match status" value="1"/>
</dbReference>
<dbReference type="HAMAP" id="MF_00127">
    <property type="entry name" value="His_tRNA_synth"/>
    <property type="match status" value="1"/>
</dbReference>
<dbReference type="InterPro" id="IPR006195">
    <property type="entry name" value="aa-tRNA-synth_II"/>
</dbReference>
<dbReference type="InterPro" id="IPR045864">
    <property type="entry name" value="aa-tRNA-synth_II/BPL/LPL"/>
</dbReference>
<dbReference type="InterPro" id="IPR004154">
    <property type="entry name" value="Anticodon-bd"/>
</dbReference>
<dbReference type="InterPro" id="IPR036621">
    <property type="entry name" value="Anticodon-bd_dom_sf"/>
</dbReference>
<dbReference type="InterPro" id="IPR015807">
    <property type="entry name" value="His-tRNA-ligase"/>
</dbReference>
<dbReference type="InterPro" id="IPR041715">
    <property type="entry name" value="HisRS-like_core"/>
</dbReference>
<dbReference type="InterPro" id="IPR004516">
    <property type="entry name" value="HisRS/HisZ"/>
</dbReference>
<dbReference type="InterPro" id="IPR033656">
    <property type="entry name" value="HisRS_anticodon"/>
</dbReference>
<dbReference type="NCBIfam" id="TIGR00442">
    <property type="entry name" value="hisS"/>
    <property type="match status" value="1"/>
</dbReference>
<dbReference type="PANTHER" id="PTHR43707:SF1">
    <property type="entry name" value="HISTIDINE--TRNA LIGASE, MITOCHONDRIAL-RELATED"/>
    <property type="match status" value="1"/>
</dbReference>
<dbReference type="PANTHER" id="PTHR43707">
    <property type="entry name" value="HISTIDYL-TRNA SYNTHETASE"/>
    <property type="match status" value="1"/>
</dbReference>
<dbReference type="Pfam" id="PF03129">
    <property type="entry name" value="HGTP_anticodon"/>
    <property type="match status" value="1"/>
</dbReference>
<dbReference type="Pfam" id="PF13393">
    <property type="entry name" value="tRNA-synt_His"/>
    <property type="match status" value="1"/>
</dbReference>
<dbReference type="PIRSF" id="PIRSF001549">
    <property type="entry name" value="His-tRNA_synth"/>
    <property type="match status" value="1"/>
</dbReference>
<dbReference type="SUPFAM" id="SSF52954">
    <property type="entry name" value="Class II aaRS ABD-related"/>
    <property type="match status" value="1"/>
</dbReference>
<dbReference type="SUPFAM" id="SSF55681">
    <property type="entry name" value="Class II aaRS and biotin synthetases"/>
    <property type="match status" value="1"/>
</dbReference>
<dbReference type="PROSITE" id="PS50862">
    <property type="entry name" value="AA_TRNA_LIGASE_II"/>
    <property type="match status" value="1"/>
</dbReference>
<protein>
    <recommendedName>
        <fullName evidence="1">Histidine--tRNA ligase</fullName>
        <ecNumber evidence="1">6.1.1.21</ecNumber>
    </recommendedName>
    <alternativeName>
        <fullName evidence="1">Histidyl-tRNA synthetase</fullName>
        <shortName evidence="1">HisRS</shortName>
    </alternativeName>
</protein>
<feature type="chain" id="PRO_1000016411" description="Histidine--tRNA ligase">
    <location>
        <begin position="1"/>
        <end position="436"/>
    </location>
</feature>
<accession>A2CCR1</accession>
<reference key="1">
    <citation type="journal article" date="2007" name="PLoS Genet.">
        <title>Patterns and implications of gene gain and loss in the evolution of Prochlorococcus.</title>
        <authorList>
            <person name="Kettler G.C."/>
            <person name="Martiny A.C."/>
            <person name="Huang K."/>
            <person name="Zucker J."/>
            <person name="Coleman M.L."/>
            <person name="Rodrigue S."/>
            <person name="Chen F."/>
            <person name="Lapidus A."/>
            <person name="Ferriera S."/>
            <person name="Johnson J."/>
            <person name="Steglich C."/>
            <person name="Church G.M."/>
            <person name="Richardson P."/>
            <person name="Chisholm S.W."/>
        </authorList>
    </citation>
    <scope>NUCLEOTIDE SEQUENCE [LARGE SCALE GENOMIC DNA]</scope>
    <source>
        <strain>MIT 9303</strain>
    </source>
</reference>
<keyword id="KW-0030">Aminoacyl-tRNA synthetase</keyword>
<keyword id="KW-0067">ATP-binding</keyword>
<keyword id="KW-0963">Cytoplasm</keyword>
<keyword id="KW-0436">Ligase</keyword>
<keyword id="KW-0547">Nucleotide-binding</keyword>
<keyword id="KW-0648">Protein biosynthesis</keyword>
<name>SYH_PROM3</name>
<evidence type="ECO:0000255" key="1">
    <source>
        <dbReference type="HAMAP-Rule" id="MF_00127"/>
    </source>
</evidence>
<organism>
    <name type="scientific">Prochlorococcus marinus (strain MIT 9303)</name>
    <dbReference type="NCBI Taxonomy" id="59922"/>
    <lineage>
        <taxon>Bacteria</taxon>
        <taxon>Bacillati</taxon>
        <taxon>Cyanobacteriota</taxon>
        <taxon>Cyanophyceae</taxon>
        <taxon>Synechococcales</taxon>
        <taxon>Prochlorococcaceae</taxon>
        <taxon>Prochlorococcus</taxon>
    </lineage>
</organism>
<gene>
    <name evidence="1" type="primary">hisS</name>
    <name type="ordered locus">P9303_25401</name>
</gene>